<sequence>MKVKLICVGKLKERYLKDGISEYQKRLSRFCQFEMIELTDERTPDKASFADNQLIMSKEAQRIHKKIGERDFVIALAIEGKQFPSETFSELISGVTVKGYSTITFIIGGSLGLDSIIKKRANMLMSFGLLTLPHQLMRLVLTEQIYRAFMITQGSPYHK</sequence>
<comment type="function">
    <text evidence="1">Specifically methylates the pseudouridine at position 1915 (m3Psi1915) in 23S rRNA.</text>
</comment>
<comment type="catalytic activity">
    <reaction evidence="1">
        <text>pseudouridine(1915) in 23S rRNA + S-adenosyl-L-methionine = N(3)-methylpseudouridine(1915) in 23S rRNA + S-adenosyl-L-homocysteine + H(+)</text>
        <dbReference type="Rhea" id="RHEA:42752"/>
        <dbReference type="Rhea" id="RHEA-COMP:10221"/>
        <dbReference type="Rhea" id="RHEA-COMP:10222"/>
        <dbReference type="ChEBI" id="CHEBI:15378"/>
        <dbReference type="ChEBI" id="CHEBI:57856"/>
        <dbReference type="ChEBI" id="CHEBI:59789"/>
        <dbReference type="ChEBI" id="CHEBI:65314"/>
        <dbReference type="ChEBI" id="CHEBI:74486"/>
        <dbReference type="EC" id="2.1.1.177"/>
    </reaction>
</comment>
<comment type="subunit">
    <text evidence="1">Homodimer.</text>
</comment>
<comment type="subcellular location">
    <subcellularLocation>
        <location evidence="1">Cytoplasm</location>
    </subcellularLocation>
</comment>
<comment type="similarity">
    <text evidence="1">Belongs to the RNA methyltransferase RlmH family.</text>
</comment>
<feature type="chain" id="PRO_0000198192" description="Ribosomal RNA large subunit methyltransferase H">
    <location>
        <begin position="1"/>
        <end position="159"/>
    </location>
</feature>
<feature type="binding site" evidence="1">
    <location>
        <position position="76"/>
    </location>
    <ligand>
        <name>S-adenosyl-L-methionine</name>
        <dbReference type="ChEBI" id="CHEBI:59789"/>
    </ligand>
</feature>
<feature type="binding site" evidence="1">
    <location>
        <position position="108"/>
    </location>
    <ligand>
        <name>S-adenosyl-L-methionine</name>
        <dbReference type="ChEBI" id="CHEBI:59789"/>
    </ligand>
</feature>
<feature type="binding site" evidence="1">
    <location>
        <begin position="127"/>
        <end position="132"/>
    </location>
    <ligand>
        <name>S-adenosyl-L-methionine</name>
        <dbReference type="ChEBI" id="CHEBI:59789"/>
    </ligand>
</feature>
<gene>
    <name evidence="1" type="primary">rlmH</name>
    <name type="ordered locus">SPy_2215</name>
    <name type="ordered locus">M5005_Spy1864</name>
</gene>
<evidence type="ECO:0000255" key="1">
    <source>
        <dbReference type="HAMAP-Rule" id="MF_00658"/>
    </source>
</evidence>
<organism>
    <name type="scientific">Streptococcus pyogenes serotype M1</name>
    <dbReference type="NCBI Taxonomy" id="301447"/>
    <lineage>
        <taxon>Bacteria</taxon>
        <taxon>Bacillati</taxon>
        <taxon>Bacillota</taxon>
        <taxon>Bacilli</taxon>
        <taxon>Lactobacillales</taxon>
        <taxon>Streptococcaceae</taxon>
        <taxon>Streptococcus</taxon>
    </lineage>
</organism>
<protein>
    <recommendedName>
        <fullName evidence="1">Ribosomal RNA large subunit methyltransferase H</fullName>
        <ecNumber evidence="1">2.1.1.177</ecNumber>
    </recommendedName>
    <alternativeName>
        <fullName evidence="1">23S rRNA (pseudouridine1915-N3)-methyltransferase</fullName>
    </alternativeName>
    <alternativeName>
        <fullName evidence="1">23S rRNA m3Psi1915 methyltransferase</fullName>
    </alternativeName>
    <alternativeName>
        <fullName evidence="1">rRNA (pseudouridine-N3-)-methyltransferase RlmH</fullName>
    </alternativeName>
</protein>
<accession>Q99XH0</accession>
<accession>Q48VZ3</accession>
<proteinExistence type="inferred from homology"/>
<name>RLMH_STRP1</name>
<reference key="1">
    <citation type="journal article" date="2001" name="Proc. Natl. Acad. Sci. U.S.A.">
        <title>Complete genome sequence of an M1 strain of Streptococcus pyogenes.</title>
        <authorList>
            <person name="Ferretti J.J."/>
            <person name="McShan W.M."/>
            <person name="Ajdic D.J."/>
            <person name="Savic D.J."/>
            <person name="Savic G."/>
            <person name="Lyon K."/>
            <person name="Primeaux C."/>
            <person name="Sezate S."/>
            <person name="Suvorov A.N."/>
            <person name="Kenton S."/>
            <person name="Lai H.S."/>
            <person name="Lin S.P."/>
            <person name="Qian Y."/>
            <person name="Jia H.G."/>
            <person name="Najar F.Z."/>
            <person name="Ren Q."/>
            <person name="Zhu H."/>
            <person name="Song L."/>
            <person name="White J."/>
            <person name="Yuan X."/>
            <person name="Clifton S.W."/>
            <person name="Roe B.A."/>
            <person name="McLaughlin R.E."/>
        </authorList>
    </citation>
    <scope>NUCLEOTIDE SEQUENCE [LARGE SCALE GENOMIC DNA]</scope>
    <source>
        <strain>ATCC 700294 / SF370 / Serotype M1</strain>
    </source>
</reference>
<reference key="2">
    <citation type="journal article" date="2005" name="J. Infect. Dis.">
        <title>Evolutionary origin and emergence of a highly successful clone of serotype M1 group A Streptococcus involved multiple horizontal gene transfer events.</title>
        <authorList>
            <person name="Sumby P."/>
            <person name="Porcella S.F."/>
            <person name="Madrigal A.G."/>
            <person name="Barbian K.D."/>
            <person name="Virtaneva K."/>
            <person name="Ricklefs S.M."/>
            <person name="Sturdevant D.E."/>
            <person name="Graham M.R."/>
            <person name="Vuopio-Varkila J."/>
            <person name="Hoe N.P."/>
            <person name="Musser J.M."/>
        </authorList>
    </citation>
    <scope>NUCLEOTIDE SEQUENCE [LARGE SCALE GENOMIC DNA]</scope>
    <source>
        <strain>ATCC BAA-947 / MGAS5005 / Serotype M1</strain>
    </source>
</reference>
<keyword id="KW-0963">Cytoplasm</keyword>
<keyword id="KW-0489">Methyltransferase</keyword>
<keyword id="KW-1185">Reference proteome</keyword>
<keyword id="KW-0698">rRNA processing</keyword>
<keyword id="KW-0949">S-adenosyl-L-methionine</keyword>
<keyword id="KW-0808">Transferase</keyword>
<dbReference type="EC" id="2.1.1.177" evidence="1"/>
<dbReference type="EMBL" id="AE004092">
    <property type="protein sequence ID" value="AAK34839.1"/>
    <property type="molecule type" value="Genomic_DNA"/>
</dbReference>
<dbReference type="EMBL" id="CP000017">
    <property type="protein sequence ID" value="AAZ52482.1"/>
    <property type="molecule type" value="Genomic_DNA"/>
</dbReference>
<dbReference type="RefSeq" id="NP_270118.1">
    <property type="nucleotide sequence ID" value="NC_002737.2"/>
</dbReference>
<dbReference type="SMR" id="Q99XH0"/>
<dbReference type="PaxDb" id="1314-HKU360_01978"/>
<dbReference type="KEGG" id="spy:SPy_2215"/>
<dbReference type="KEGG" id="spz:M5005_Spy1864"/>
<dbReference type="PATRIC" id="fig|160490.10.peg.1920"/>
<dbReference type="HOGENOM" id="CLU_100552_0_0_9"/>
<dbReference type="OMA" id="NEPYHHQ"/>
<dbReference type="Proteomes" id="UP000000750">
    <property type="component" value="Chromosome"/>
</dbReference>
<dbReference type="GO" id="GO:0005737">
    <property type="term" value="C:cytoplasm"/>
    <property type="evidence" value="ECO:0007669"/>
    <property type="project" value="UniProtKB-SubCell"/>
</dbReference>
<dbReference type="GO" id="GO:0070038">
    <property type="term" value="F:rRNA (pseudouridine-N3-)-methyltransferase activity"/>
    <property type="evidence" value="ECO:0007669"/>
    <property type="project" value="UniProtKB-UniRule"/>
</dbReference>
<dbReference type="CDD" id="cd18081">
    <property type="entry name" value="RlmH-like"/>
    <property type="match status" value="1"/>
</dbReference>
<dbReference type="Gene3D" id="3.40.1280.10">
    <property type="match status" value="1"/>
</dbReference>
<dbReference type="HAMAP" id="MF_00658">
    <property type="entry name" value="23SrRNA_methyltr_H"/>
    <property type="match status" value="1"/>
</dbReference>
<dbReference type="InterPro" id="IPR029028">
    <property type="entry name" value="Alpha/beta_knot_MTases"/>
</dbReference>
<dbReference type="InterPro" id="IPR003742">
    <property type="entry name" value="RlmH-like"/>
</dbReference>
<dbReference type="InterPro" id="IPR029026">
    <property type="entry name" value="tRNA_m1G_MTases_N"/>
</dbReference>
<dbReference type="NCBIfam" id="NF000985">
    <property type="entry name" value="PRK00103.1-3"/>
    <property type="match status" value="1"/>
</dbReference>
<dbReference type="NCBIfam" id="TIGR00246">
    <property type="entry name" value="tRNA_RlmH_YbeA"/>
    <property type="match status" value="1"/>
</dbReference>
<dbReference type="PANTHER" id="PTHR33603">
    <property type="entry name" value="METHYLTRANSFERASE"/>
    <property type="match status" value="1"/>
</dbReference>
<dbReference type="PANTHER" id="PTHR33603:SF1">
    <property type="entry name" value="RIBOSOMAL RNA LARGE SUBUNIT METHYLTRANSFERASE H"/>
    <property type="match status" value="1"/>
</dbReference>
<dbReference type="Pfam" id="PF02590">
    <property type="entry name" value="SPOUT_MTase"/>
    <property type="match status" value="1"/>
</dbReference>
<dbReference type="PIRSF" id="PIRSF004505">
    <property type="entry name" value="MT_bac"/>
    <property type="match status" value="1"/>
</dbReference>
<dbReference type="SUPFAM" id="SSF75217">
    <property type="entry name" value="alpha/beta knot"/>
    <property type="match status" value="1"/>
</dbReference>